<keyword id="KW-0378">Hydrolase</keyword>
<keyword id="KW-0460">Magnesium</keyword>
<keyword id="KW-0464">Manganese</keyword>
<keyword id="KW-0479">Metal-binding</keyword>
<keyword id="KW-0546">Nucleotide metabolism</keyword>
<keyword id="KW-0547">Nucleotide-binding</keyword>
<organism>
    <name type="scientific">Pyrobaculum calidifontis (strain DSM 21063 / JCM 11548 / VA1)</name>
    <dbReference type="NCBI Taxonomy" id="410359"/>
    <lineage>
        <taxon>Archaea</taxon>
        <taxon>Thermoproteota</taxon>
        <taxon>Thermoprotei</taxon>
        <taxon>Thermoproteales</taxon>
        <taxon>Thermoproteaceae</taxon>
        <taxon>Pyrobaculum</taxon>
    </lineage>
</organism>
<name>NCPP_PYRCJ</name>
<protein>
    <recommendedName>
        <fullName evidence="1">Probable inosine/xanthosine triphosphatase</fullName>
        <shortName evidence="1">ITPase/XTPase</shortName>
        <ecNumber evidence="1">3.6.1.73</ecNumber>
    </recommendedName>
    <alternativeName>
        <fullName evidence="1">Non-canonical purine NTP phosphatase</fullName>
    </alternativeName>
    <alternativeName>
        <fullName evidence="1">Non-standard purine NTP phosphatase</fullName>
    </alternativeName>
    <alternativeName>
        <fullName evidence="1">Nucleoside-triphosphate phosphatase</fullName>
        <shortName evidence="1">NTPase</shortName>
    </alternativeName>
</protein>
<sequence length="178" mass="18916">MKVAAATRNPNKLRAIREAYRTFGFPAEVVPVDKPPGAPPQPIGLDAVAKWALERARHALAAAPGADHGVGIEAGVVEVAGYHLDITIAAIVDREGYVTVGTSPAFQIPTALLHDVLQGRELGATAEAHYGRPAVGYREGIIGLLTRGVVKRIDLNYAAVLMALTPRLPHNAPHYRKA</sequence>
<comment type="function">
    <text evidence="1">Phosphatase that hydrolyzes non-canonical purine nucleotides such as XTP and ITP to their respective diphosphate derivatives. Probably excludes non-canonical purines from DNA/RNA precursor pool, thus preventing their incorporation into DNA/RNA and avoiding chromosomal lesions.</text>
</comment>
<comment type="catalytic activity">
    <reaction evidence="1">
        <text>XTP + H2O = XDP + phosphate + H(+)</text>
        <dbReference type="Rhea" id="RHEA:28406"/>
        <dbReference type="ChEBI" id="CHEBI:15377"/>
        <dbReference type="ChEBI" id="CHEBI:15378"/>
        <dbReference type="ChEBI" id="CHEBI:43474"/>
        <dbReference type="ChEBI" id="CHEBI:59884"/>
        <dbReference type="ChEBI" id="CHEBI:61314"/>
        <dbReference type="EC" id="3.6.1.73"/>
    </reaction>
</comment>
<comment type="catalytic activity">
    <reaction evidence="1">
        <text>ITP + H2O = IDP + phosphate + H(+)</text>
        <dbReference type="Rhea" id="RHEA:28330"/>
        <dbReference type="ChEBI" id="CHEBI:15377"/>
        <dbReference type="ChEBI" id="CHEBI:15378"/>
        <dbReference type="ChEBI" id="CHEBI:43474"/>
        <dbReference type="ChEBI" id="CHEBI:58280"/>
        <dbReference type="ChEBI" id="CHEBI:61402"/>
        <dbReference type="EC" id="3.6.1.73"/>
    </reaction>
</comment>
<comment type="cofactor">
    <cofactor evidence="1">
        <name>Mg(2+)</name>
        <dbReference type="ChEBI" id="CHEBI:18420"/>
    </cofactor>
    <cofactor evidence="1">
        <name>Mn(2+)</name>
        <dbReference type="ChEBI" id="CHEBI:29035"/>
    </cofactor>
    <text evidence="1">Binds 1 divalent metal cation per subunit; can use either Mg(2+) or Mn(2+).</text>
</comment>
<comment type="subunit">
    <text evidence="1">Homodimer.</text>
</comment>
<comment type="similarity">
    <text evidence="1">Belongs to the YjjX NTPase family.</text>
</comment>
<accession>A3MVS2</accession>
<evidence type="ECO:0000255" key="1">
    <source>
        <dbReference type="HAMAP-Rule" id="MF_00648"/>
    </source>
</evidence>
<gene>
    <name type="ordered locus">Pcal_1315</name>
</gene>
<reference key="1">
    <citation type="submission" date="2007-02" db="EMBL/GenBank/DDBJ databases">
        <title>Complete sequence of Pyrobaculum calidifontis JCM 11548.</title>
        <authorList>
            <consortium name="US DOE Joint Genome Institute"/>
            <person name="Copeland A."/>
            <person name="Lucas S."/>
            <person name="Lapidus A."/>
            <person name="Barry K."/>
            <person name="Glavina del Rio T."/>
            <person name="Dalin E."/>
            <person name="Tice H."/>
            <person name="Pitluck S."/>
            <person name="Chain P."/>
            <person name="Malfatti S."/>
            <person name="Shin M."/>
            <person name="Vergez L."/>
            <person name="Schmutz J."/>
            <person name="Larimer F."/>
            <person name="Land M."/>
            <person name="Hauser L."/>
            <person name="Kyrpides N."/>
            <person name="Mikhailova N."/>
            <person name="Cozen A.E."/>
            <person name="Fitz-Gibbon S.T."/>
            <person name="House C.H."/>
            <person name="Saltikov C."/>
            <person name="Lowe T.M."/>
            <person name="Richardson P."/>
        </authorList>
    </citation>
    <scope>NUCLEOTIDE SEQUENCE [LARGE SCALE GENOMIC DNA]</scope>
    <source>
        <strain>DSM 21063 / JCM 11548 / VA1</strain>
    </source>
</reference>
<dbReference type="EC" id="3.6.1.73" evidence="1"/>
<dbReference type="EMBL" id="CP000561">
    <property type="protein sequence ID" value="ABO08739.1"/>
    <property type="molecule type" value="Genomic_DNA"/>
</dbReference>
<dbReference type="RefSeq" id="WP_011849997.1">
    <property type="nucleotide sequence ID" value="NC_009073.1"/>
</dbReference>
<dbReference type="SMR" id="A3MVS2"/>
<dbReference type="STRING" id="410359.Pcal_1315"/>
<dbReference type="GeneID" id="4909501"/>
<dbReference type="KEGG" id="pcl:Pcal_1315"/>
<dbReference type="eggNOG" id="arCOG01221">
    <property type="taxonomic scope" value="Archaea"/>
</dbReference>
<dbReference type="HOGENOM" id="CLU_087417_0_1_2"/>
<dbReference type="OrthoDB" id="52857at2157"/>
<dbReference type="Proteomes" id="UP000001431">
    <property type="component" value="Chromosome"/>
</dbReference>
<dbReference type="GO" id="GO:0103023">
    <property type="term" value="F:ITPase activity"/>
    <property type="evidence" value="ECO:0007669"/>
    <property type="project" value="UniProtKB-EC"/>
</dbReference>
<dbReference type="GO" id="GO:0046872">
    <property type="term" value="F:metal ion binding"/>
    <property type="evidence" value="ECO:0007669"/>
    <property type="project" value="UniProtKB-KW"/>
</dbReference>
<dbReference type="GO" id="GO:0000166">
    <property type="term" value="F:nucleotide binding"/>
    <property type="evidence" value="ECO:0007669"/>
    <property type="project" value="UniProtKB-KW"/>
</dbReference>
<dbReference type="GO" id="GO:0017111">
    <property type="term" value="F:ribonucleoside triphosphate phosphatase activity"/>
    <property type="evidence" value="ECO:0000250"/>
    <property type="project" value="UniProtKB"/>
</dbReference>
<dbReference type="GO" id="GO:0009117">
    <property type="term" value="P:nucleotide metabolic process"/>
    <property type="evidence" value="ECO:0007669"/>
    <property type="project" value="UniProtKB-KW"/>
</dbReference>
<dbReference type="GO" id="GO:0006772">
    <property type="term" value="P:thiamine metabolic process"/>
    <property type="evidence" value="ECO:0007669"/>
    <property type="project" value="TreeGrafter"/>
</dbReference>
<dbReference type="FunFam" id="3.90.950.10:FF:000002">
    <property type="entry name" value="Inosine/xanthosine triphosphatase"/>
    <property type="match status" value="1"/>
</dbReference>
<dbReference type="Gene3D" id="3.90.950.10">
    <property type="match status" value="1"/>
</dbReference>
<dbReference type="HAMAP" id="MF_00648">
    <property type="entry name" value="Non_canon_purine_NTPase_YjjX"/>
    <property type="match status" value="1"/>
</dbReference>
<dbReference type="InterPro" id="IPR029001">
    <property type="entry name" value="ITPase-like_fam"/>
</dbReference>
<dbReference type="InterPro" id="IPR002786">
    <property type="entry name" value="Non_canon_purine_NTPase"/>
</dbReference>
<dbReference type="InterPro" id="IPR026533">
    <property type="entry name" value="NTPase/PRRC1"/>
</dbReference>
<dbReference type="InterPro" id="IPR050299">
    <property type="entry name" value="YjjX_NTPase"/>
</dbReference>
<dbReference type="PANTHER" id="PTHR34699">
    <property type="match status" value="1"/>
</dbReference>
<dbReference type="PANTHER" id="PTHR34699:SF2">
    <property type="entry name" value="NON-CANONICAL PURINE NTP PHOSPHATASE_PRRC1 DOMAIN-CONTAINING PROTEIN"/>
    <property type="match status" value="1"/>
</dbReference>
<dbReference type="Pfam" id="PF01931">
    <property type="entry name" value="NTPase_I-T"/>
    <property type="match status" value="1"/>
</dbReference>
<dbReference type="SUPFAM" id="SSF52972">
    <property type="entry name" value="ITPase-like"/>
    <property type="match status" value="1"/>
</dbReference>
<feature type="chain" id="PRO_1000056955" description="Probable inosine/xanthosine triphosphatase">
    <location>
        <begin position="1"/>
        <end position="178"/>
    </location>
</feature>
<proteinExistence type="inferred from homology"/>